<protein>
    <recommendedName>
        <fullName>Guanine nucleotide-binding protein subunit beta-1</fullName>
    </recommendedName>
</protein>
<name>GBB1_DROME</name>
<gene>
    <name type="primary">Gbeta13F</name>
    <name type="synonym">Gb13F</name>
    <name type="ORF">CG10545</name>
</gene>
<sequence length="340" mass="37133">MNELDSLRQEAESLKNAIRDARKAACDTSLLQAATSLEPIGRIQMRTRRTLRGHLAKIYAMHWGNDSRNLVSASQDGKLIVWDSHTTNKVHAIPLRSSWVMTCAYAPSGSYVACGGLDNMCSIYNLKTREGNVRVSRELPGHGGYLSCCRFLDDNQIVTSSGDMSCGLWDIETGLQVTSFLGHTGDVMALSLAPQCKTFVSGACDASAKLWDIREGVCKQTFPGHESDINAVTFFPNGQAFATGSDDATCRLFDIRADQELAMYSHDNIICGITSVAFSKSGRLLLAGYDDFNCNVWDTMKAERSGILAGHDNRVSCLGVTENGMAVATGSWDSFLRVWN</sequence>
<dbReference type="EMBL" id="M22567">
    <property type="protein sequence ID" value="AAB59247.1"/>
    <property type="molecule type" value="Genomic_DNA"/>
</dbReference>
<dbReference type="EMBL" id="AE014298">
    <property type="protein sequence ID" value="AAF48530.1"/>
    <property type="molecule type" value="Genomic_DNA"/>
</dbReference>
<dbReference type="EMBL" id="AY058566">
    <property type="protein sequence ID" value="AAL13795.1"/>
    <property type="molecule type" value="mRNA"/>
</dbReference>
<dbReference type="PIR" id="A40489">
    <property type="entry name" value="RGFFBH"/>
</dbReference>
<dbReference type="RefSeq" id="NP_001303567.1">
    <property type="nucleotide sequence ID" value="NM_001316638.2"/>
</dbReference>
<dbReference type="RefSeq" id="NP_525090.1">
    <property type="nucleotide sequence ID" value="NM_080351.7"/>
</dbReference>
<dbReference type="RefSeq" id="NP_996459.1">
    <property type="nucleotide sequence ID" value="NM_206736.2"/>
</dbReference>
<dbReference type="RefSeq" id="NP_996460.1">
    <property type="nucleotide sequence ID" value="NM_206737.2"/>
</dbReference>
<dbReference type="RefSeq" id="NP_996461.1">
    <property type="nucleotide sequence ID" value="NM_206738.3"/>
</dbReference>
<dbReference type="RefSeq" id="NP_996462.1">
    <property type="nucleotide sequence ID" value="NM_206739.2"/>
</dbReference>
<dbReference type="SMR" id="P26308"/>
<dbReference type="BioGRID" id="58892">
    <property type="interactions" value="11"/>
</dbReference>
<dbReference type="DIP" id="DIP-18432N"/>
<dbReference type="FunCoup" id="P26308">
    <property type="interactions" value="502"/>
</dbReference>
<dbReference type="IntAct" id="P26308">
    <property type="interactions" value="4"/>
</dbReference>
<dbReference type="STRING" id="7227.FBpp0089184"/>
<dbReference type="iPTMnet" id="P26308"/>
<dbReference type="PaxDb" id="7227-FBpp0089182"/>
<dbReference type="DNASU" id="32544"/>
<dbReference type="EnsemblMetazoa" id="FBtr0074107">
    <property type="protein sequence ID" value="FBpp0073921"/>
    <property type="gene ID" value="FBgn0001105"/>
</dbReference>
<dbReference type="EnsemblMetazoa" id="FBtr0074108">
    <property type="protein sequence ID" value="FBpp0089182"/>
    <property type="gene ID" value="FBgn0001105"/>
</dbReference>
<dbReference type="EnsemblMetazoa" id="FBtr0074110">
    <property type="protein sequence ID" value="FBpp0089184"/>
    <property type="gene ID" value="FBgn0001105"/>
</dbReference>
<dbReference type="EnsemblMetazoa" id="FBtr0074111">
    <property type="protein sequence ID" value="FBpp0089185"/>
    <property type="gene ID" value="FBgn0001105"/>
</dbReference>
<dbReference type="EnsemblMetazoa" id="FBtr0331597">
    <property type="protein sequence ID" value="FBpp0303987"/>
    <property type="gene ID" value="FBgn0001105"/>
</dbReference>
<dbReference type="EnsemblMetazoa" id="FBtr0346794">
    <property type="protein sequence ID" value="FBpp0312372"/>
    <property type="gene ID" value="FBgn0001105"/>
</dbReference>
<dbReference type="GeneID" id="32544"/>
<dbReference type="KEGG" id="dme:Dmel_CG10545"/>
<dbReference type="AGR" id="FB:FBgn0001105"/>
<dbReference type="CTD" id="32544"/>
<dbReference type="FlyBase" id="FBgn0001105">
    <property type="gene designation" value="Gbeta13F"/>
</dbReference>
<dbReference type="VEuPathDB" id="VectorBase:FBgn0001105"/>
<dbReference type="eggNOG" id="KOG0286">
    <property type="taxonomic scope" value="Eukaryota"/>
</dbReference>
<dbReference type="GeneTree" id="ENSGT01000000214413"/>
<dbReference type="HOGENOM" id="CLU_000288_57_34_1"/>
<dbReference type="InParanoid" id="P26308"/>
<dbReference type="OMA" id="PLDSQWV"/>
<dbReference type="OrthoDB" id="10255630at2759"/>
<dbReference type="PhylomeDB" id="P26308"/>
<dbReference type="Reactome" id="R-DME-1296041">
    <property type="pathway name" value="Activation of G protein gated Potassium channels"/>
</dbReference>
<dbReference type="Reactome" id="R-DME-202040">
    <property type="pathway name" value="G-protein activation"/>
</dbReference>
<dbReference type="Reactome" id="R-DME-392170">
    <property type="pathway name" value="ADP signalling through P2Y purinoceptor 12"/>
</dbReference>
<dbReference type="Reactome" id="R-DME-392451">
    <property type="pathway name" value="G beta:gamma signalling through PI3Kgamma"/>
</dbReference>
<dbReference type="Reactome" id="R-DME-392851">
    <property type="pathway name" value="Prostacyclin signalling through prostacyclin receptor"/>
</dbReference>
<dbReference type="Reactome" id="R-DME-400042">
    <property type="pathway name" value="Adrenaline,noradrenaline inhibits insulin secretion"/>
</dbReference>
<dbReference type="Reactome" id="R-DME-4086398">
    <property type="pathway name" value="Ca2+ pathway"/>
</dbReference>
<dbReference type="Reactome" id="R-DME-416476">
    <property type="pathway name" value="G alpha (q) signalling events"/>
</dbReference>
<dbReference type="Reactome" id="R-DME-416482">
    <property type="pathway name" value="G alpha (12/13) signalling events"/>
</dbReference>
<dbReference type="Reactome" id="R-DME-418217">
    <property type="pathway name" value="G beta:gamma signalling through PLC beta"/>
</dbReference>
<dbReference type="Reactome" id="R-DME-418555">
    <property type="pathway name" value="G alpha (s) signalling events"/>
</dbReference>
<dbReference type="Reactome" id="R-DME-418594">
    <property type="pathway name" value="G alpha (i) signalling events"/>
</dbReference>
<dbReference type="Reactome" id="R-DME-418597">
    <property type="pathway name" value="G alpha (z) signalling events"/>
</dbReference>
<dbReference type="Reactome" id="R-DME-428930">
    <property type="pathway name" value="Thromboxane signalling through TP receptor"/>
</dbReference>
<dbReference type="Reactome" id="R-DME-500657">
    <property type="pathway name" value="Presynaptic function of Kainate receptors"/>
</dbReference>
<dbReference type="Reactome" id="R-DME-6814122">
    <property type="pathway name" value="Cooperation of PDCL (PhLP1) and TRiC/CCT in G-protein beta folding"/>
</dbReference>
<dbReference type="Reactome" id="R-DME-8964315">
    <property type="pathway name" value="G beta:gamma signalling through BTK"/>
</dbReference>
<dbReference type="Reactome" id="R-DME-8964616">
    <property type="pathway name" value="G beta:gamma signalling through CDC42"/>
</dbReference>
<dbReference type="Reactome" id="R-DME-9009391">
    <property type="pathway name" value="Extra-nuclear estrogen signaling"/>
</dbReference>
<dbReference type="Reactome" id="R-DME-997272">
    <property type="pathway name" value="Inhibition of voltage gated Ca2+ channels via Gbeta/gamma subunits"/>
</dbReference>
<dbReference type="BioGRID-ORCS" id="32544">
    <property type="hits" value="0 hits in 1 CRISPR screen"/>
</dbReference>
<dbReference type="ChiTaRS" id="Gbeta13F">
    <property type="organism name" value="fly"/>
</dbReference>
<dbReference type="GenomeRNAi" id="32544"/>
<dbReference type="PRO" id="PR:P26308"/>
<dbReference type="Proteomes" id="UP000000803">
    <property type="component" value="Chromosome X"/>
</dbReference>
<dbReference type="Bgee" id="FBgn0001105">
    <property type="expression patterns" value="Expressed in adult gamma Kenyon cell in brain and 299 other cell types or tissues"/>
</dbReference>
<dbReference type="ExpressionAtlas" id="P26308">
    <property type="expression patterns" value="baseline and differential"/>
</dbReference>
<dbReference type="GO" id="GO:0005737">
    <property type="term" value="C:cytoplasm"/>
    <property type="evidence" value="ECO:0000318"/>
    <property type="project" value="GO_Central"/>
</dbReference>
<dbReference type="GO" id="GO:0005834">
    <property type="term" value="C:heterotrimeric G-protein complex"/>
    <property type="evidence" value="ECO:0000314"/>
    <property type="project" value="FlyBase"/>
</dbReference>
<dbReference type="GO" id="GO:0005886">
    <property type="term" value="C:plasma membrane"/>
    <property type="evidence" value="ECO:0000314"/>
    <property type="project" value="FlyBase"/>
</dbReference>
<dbReference type="GO" id="GO:0030159">
    <property type="term" value="F:signaling receptor complex adaptor activity"/>
    <property type="evidence" value="ECO:0000318"/>
    <property type="project" value="GO_Central"/>
</dbReference>
<dbReference type="GO" id="GO:0045176">
    <property type="term" value="P:apical protein localization"/>
    <property type="evidence" value="ECO:0000304"/>
    <property type="project" value="FlyBase"/>
</dbReference>
<dbReference type="GO" id="GO:0055059">
    <property type="term" value="P:asymmetric neuroblast division"/>
    <property type="evidence" value="ECO:0000315"/>
    <property type="project" value="FlyBase"/>
</dbReference>
<dbReference type="GO" id="GO:0061343">
    <property type="term" value="P:cell adhesion involved in heart morphogenesis"/>
    <property type="evidence" value="ECO:0000315"/>
    <property type="project" value="FlyBase"/>
</dbReference>
<dbReference type="GO" id="GO:0060027">
    <property type="term" value="P:convergent extension involved in gastrulation"/>
    <property type="evidence" value="ECO:0000315"/>
    <property type="project" value="FlyBase"/>
</dbReference>
<dbReference type="GO" id="GO:0003380">
    <property type="term" value="P:establishment or maintenance of cytoskeleton polarity involved in gastrulation"/>
    <property type="evidence" value="ECO:0000315"/>
    <property type="project" value="FlyBase"/>
</dbReference>
<dbReference type="GO" id="GO:0007186">
    <property type="term" value="P:G protein-coupled receptor signaling pathway"/>
    <property type="evidence" value="ECO:0000314"/>
    <property type="project" value="FlyBase"/>
</dbReference>
<dbReference type="GO" id="GO:0048383">
    <property type="term" value="P:mesectoderm development"/>
    <property type="evidence" value="ECO:0000315"/>
    <property type="project" value="FlyBase"/>
</dbReference>
<dbReference type="GO" id="GO:0045879">
    <property type="term" value="P:negative regulation of smoothened signaling pathway"/>
    <property type="evidence" value="ECO:0000316"/>
    <property type="project" value="FlyBase"/>
</dbReference>
<dbReference type="GO" id="GO:0010470">
    <property type="term" value="P:regulation of gastrulation"/>
    <property type="evidence" value="ECO:0000315"/>
    <property type="project" value="FlyBase"/>
</dbReference>
<dbReference type="GO" id="GO:0043519">
    <property type="term" value="P:regulation of myosin II filament organization"/>
    <property type="evidence" value="ECO:0000315"/>
    <property type="project" value="FlyBase"/>
</dbReference>
<dbReference type="CDD" id="cd00200">
    <property type="entry name" value="WD40"/>
    <property type="match status" value="1"/>
</dbReference>
<dbReference type="FunFam" id="2.130.10.10:FF:000007">
    <property type="entry name" value="Guanine nucleotide-binding protein G(I)/G(S)/G(T) subunit beta-1"/>
    <property type="match status" value="1"/>
</dbReference>
<dbReference type="Gene3D" id="2.130.10.10">
    <property type="entry name" value="YVTN repeat-like/Quinoprotein amine dehydrogenase"/>
    <property type="match status" value="1"/>
</dbReference>
<dbReference type="InterPro" id="IPR020472">
    <property type="entry name" value="G-protein_beta_WD-40_rep"/>
</dbReference>
<dbReference type="InterPro" id="IPR001632">
    <property type="entry name" value="Gprotein_B"/>
</dbReference>
<dbReference type="InterPro" id="IPR016346">
    <property type="entry name" value="Guanine_nucleotide-bd_bsu"/>
</dbReference>
<dbReference type="InterPro" id="IPR015943">
    <property type="entry name" value="WD40/YVTN_repeat-like_dom_sf"/>
</dbReference>
<dbReference type="InterPro" id="IPR019775">
    <property type="entry name" value="WD40_repeat_CS"/>
</dbReference>
<dbReference type="InterPro" id="IPR036322">
    <property type="entry name" value="WD40_repeat_dom_sf"/>
</dbReference>
<dbReference type="InterPro" id="IPR001680">
    <property type="entry name" value="WD40_rpt"/>
</dbReference>
<dbReference type="PANTHER" id="PTHR19850">
    <property type="entry name" value="GUANINE NUCLEOTIDE-BINDING PROTEIN BETA G PROTEIN BETA"/>
    <property type="match status" value="1"/>
</dbReference>
<dbReference type="Pfam" id="PF25391">
    <property type="entry name" value="WD40_Gbeta"/>
    <property type="match status" value="1"/>
</dbReference>
<dbReference type="PIRSF" id="PIRSF002394">
    <property type="entry name" value="GN-bd_beta"/>
    <property type="match status" value="1"/>
</dbReference>
<dbReference type="PRINTS" id="PR00319">
    <property type="entry name" value="GPROTEINB"/>
</dbReference>
<dbReference type="PRINTS" id="PR00320">
    <property type="entry name" value="GPROTEINBRPT"/>
</dbReference>
<dbReference type="SMART" id="SM00320">
    <property type="entry name" value="WD40"/>
    <property type="match status" value="7"/>
</dbReference>
<dbReference type="SUPFAM" id="SSF50978">
    <property type="entry name" value="WD40 repeat-like"/>
    <property type="match status" value="1"/>
</dbReference>
<dbReference type="PROSITE" id="PS00678">
    <property type="entry name" value="WD_REPEATS_1"/>
    <property type="match status" value="3"/>
</dbReference>
<dbReference type="PROSITE" id="PS50082">
    <property type="entry name" value="WD_REPEATS_2"/>
    <property type="match status" value="6"/>
</dbReference>
<dbReference type="PROSITE" id="PS50294">
    <property type="entry name" value="WD_REPEATS_REGION"/>
    <property type="match status" value="4"/>
</dbReference>
<reference key="1">
    <citation type="journal article" date="1988" name="Proc. Natl. Acad. Sci. U.S.A.">
        <title>Cloning of a Drosophila melanogaster guanine nucleotide regulatory protein beta-subunit gene and characterization of its expression during development.</title>
        <authorList>
            <person name="Yarfitz S."/>
            <person name="Provost N.M."/>
            <person name="Hurley J.B."/>
        </authorList>
    </citation>
    <scope>NUCLEOTIDE SEQUENCE [GENOMIC DNA]</scope>
    <scope>DEVELOPMENTAL STAGE</scope>
    <source>
        <strain>Canton-S</strain>
    </source>
</reference>
<reference key="2">
    <citation type="journal article" date="2000" name="Science">
        <title>The genome sequence of Drosophila melanogaster.</title>
        <authorList>
            <person name="Adams M.D."/>
            <person name="Celniker S.E."/>
            <person name="Holt R.A."/>
            <person name="Evans C.A."/>
            <person name="Gocayne J.D."/>
            <person name="Amanatides P.G."/>
            <person name="Scherer S.E."/>
            <person name="Li P.W."/>
            <person name="Hoskins R.A."/>
            <person name="Galle R.F."/>
            <person name="George R.A."/>
            <person name="Lewis S.E."/>
            <person name="Richards S."/>
            <person name="Ashburner M."/>
            <person name="Henderson S.N."/>
            <person name="Sutton G.G."/>
            <person name="Wortman J.R."/>
            <person name="Yandell M.D."/>
            <person name="Zhang Q."/>
            <person name="Chen L.X."/>
            <person name="Brandon R.C."/>
            <person name="Rogers Y.-H.C."/>
            <person name="Blazej R.G."/>
            <person name="Champe M."/>
            <person name="Pfeiffer B.D."/>
            <person name="Wan K.H."/>
            <person name="Doyle C."/>
            <person name="Baxter E.G."/>
            <person name="Helt G."/>
            <person name="Nelson C.R."/>
            <person name="Miklos G.L.G."/>
            <person name="Abril J.F."/>
            <person name="Agbayani A."/>
            <person name="An H.-J."/>
            <person name="Andrews-Pfannkoch C."/>
            <person name="Baldwin D."/>
            <person name="Ballew R.M."/>
            <person name="Basu A."/>
            <person name="Baxendale J."/>
            <person name="Bayraktaroglu L."/>
            <person name="Beasley E.M."/>
            <person name="Beeson K.Y."/>
            <person name="Benos P.V."/>
            <person name="Berman B.P."/>
            <person name="Bhandari D."/>
            <person name="Bolshakov S."/>
            <person name="Borkova D."/>
            <person name="Botchan M.R."/>
            <person name="Bouck J."/>
            <person name="Brokstein P."/>
            <person name="Brottier P."/>
            <person name="Burtis K.C."/>
            <person name="Busam D.A."/>
            <person name="Butler H."/>
            <person name="Cadieu E."/>
            <person name="Center A."/>
            <person name="Chandra I."/>
            <person name="Cherry J.M."/>
            <person name="Cawley S."/>
            <person name="Dahlke C."/>
            <person name="Davenport L.B."/>
            <person name="Davies P."/>
            <person name="de Pablos B."/>
            <person name="Delcher A."/>
            <person name="Deng Z."/>
            <person name="Mays A.D."/>
            <person name="Dew I."/>
            <person name="Dietz S.M."/>
            <person name="Dodson K."/>
            <person name="Doup L.E."/>
            <person name="Downes M."/>
            <person name="Dugan-Rocha S."/>
            <person name="Dunkov B.C."/>
            <person name="Dunn P."/>
            <person name="Durbin K.J."/>
            <person name="Evangelista C.C."/>
            <person name="Ferraz C."/>
            <person name="Ferriera S."/>
            <person name="Fleischmann W."/>
            <person name="Fosler C."/>
            <person name="Gabrielian A.E."/>
            <person name="Garg N.S."/>
            <person name="Gelbart W.M."/>
            <person name="Glasser K."/>
            <person name="Glodek A."/>
            <person name="Gong F."/>
            <person name="Gorrell J.H."/>
            <person name="Gu Z."/>
            <person name="Guan P."/>
            <person name="Harris M."/>
            <person name="Harris N.L."/>
            <person name="Harvey D.A."/>
            <person name="Heiman T.J."/>
            <person name="Hernandez J.R."/>
            <person name="Houck J."/>
            <person name="Hostin D."/>
            <person name="Houston K.A."/>
            <person name="Howland T.J."/>
            <person name="Wei M.-H."/>
            <person name="Ibegwam C."/>
            <person name="Jalali M."/>
            <person name="Kalush F."/>
            <person name="Karpen G.H."/>
            <person name="Ke Z."/>
            <person name="Kennison J.A."/>
            <person name="Ketchum K.A."/>
            <person name="Kimmel B.E."/>
            <person name="Kodira C.D."/>
            <person name="Kraft C.L."/>
            <person name="Kravitz S."/>
            <person name="Kulp D."/>
            <person name="Lai Z."/>
            <person name="Lasko P."/>
            <person name="Lei Y."/>
            <person name="Levitsky A.A."/>
            <person name="Li J.H."/>
            <person name="Li Z."/>
            <person name="Liang Y."/>
            <person name="Lin X."/>
            <person name="Liu X."/>
            <person name="Mattei B."/>
            <person name="McIntosh T.C."/>
            <person name="McLeod M.P."/>
            <person name="McPherson D."/>
            <person name="Merkulov G."/>
            <person name="Milshina N.V."/>
            <person name="Mobarry C."/>
            <person name="Morris J."/>
            <person name="Moshrefi A."/>
            <person name="Mount S.M."/>
            <person name="Moy M."/>
            <person name="Murphy B."/>
            <person name="Murphy L."/>
            <person name="Muzny D.M."/>
            <person name="Nelson D.L."/>
            <person name="Nelson D.R."/>
            <person name="Nelson K.A."/>
            <person name="Nixon K."/>
            <person name="Nusskern D.R."/>
            <person name="Pacleb J.M."/>
            <person name="Palazzolo M."/>
            <person name="Pittman G.S."/>
            <person name="Pan S."/>
            <person name="Pollard J."/>
            <person name="Puri V."/>
            <person name="Reese M.G."/>
            <person name="Reinert K."/>
            <person name="Remington K."/>
            <person name="Saunders R.D.C."/>
            <person name="Scheeler F."/>
            <person name="Shen H."/>
            <person name="Shue B.C."/>
            <person name="Siden-Kiamos I."/>
            <person name="Simpson M."/>
            <person name="Skupski M.P."/>
            <person name="Smith T.J."/>
            <person name="Spier E."/>
            <person name="Spradling A.C."/>
            <person name="Stapleton M."/>
            <person name="Strong R."/>
            <person name="Sun E."/>
            <person name="Svirskas R."/>
            <person name="Tector C."/>
            <person name="Turner R."/>
            <person name="Venter E."/>
            <person name="Wang A.H."/>
            <person name="Wang X."/>
            <person name="Wang Z.-Y."/>
            <person name="Wassarman D.A."/>
            <person name="Weinstock G.M."/>
            <person name="Weissenbach J."/>
            <person name="Williams S.M."/>
            <person name="Woodage T."/>
            <person name="Worley K.C."/>
            <person name="Wu D."/>
            <person name="Yang S."/>
            <person name="Yao Q.A."/>
            <person name="Ye J."/>
            <person name="Yeh R.-F."/>
            <person name="Zaveri J.S."/>
            <person name="Zhan M."/>
            <person name="Zhang G."/>
            <person name="Zhao Q."/>
            <person name="Zheng L."/>
            <person name="Zheng X.H."/>
            <person name="Zhong F.N."/>
            <person name="Zhong W."/>
            <person name="Zhou X."/>
            <person name="Zhu S.C."/>
            <person name="Zhu X."/>
            <person name="Smith H.O."/>
            <person name="Gibbs R.A."/>
            <person name="Myers E.W."/>
            <person name="Rubin G.M."/>
            <person name="Venter J.C."/>
        </authorList>
    </citation>
    <scope>NUCLEOTIDE SEQUENCE [LARGE SCALE GENOMIC DNA]</scope>
    <source>
        <strain>Berkeley</strain>
    </source>
</reference>
<reference key="3">
    <citation type="journal article" date="2002" name="Genome Biol.">
        <title>Annotation of the Drosophila melanogaster euchromatic genome: a systematic review.</title>
        <authorList>
            <person name="Misra S."/>
            <person name="Crosby M.A."/>
            <person name="Mungall C.J."/>
            <person name="Matthews B.B."/>
            <person name="Campbell K.S."/>
            <person name="Hradecky P."/>
            <person name="Huang Y."/>
            <person name="Kaminker J.S."/>
            <person name="Millburn G.H."/>
            <person name="Prochnik S.E."/>
            <person name="Smith C.D."/>
            <person name="Tupy J.L."/>
            <person name="Whitfield E.J."/>
            <person name="Bayraktaroglu L."/>
            <person name="Berman B.P."/>
            <person name="Bettencourt B.R."/>
            <person name="Celniker S.E."/>
            <person name="de Grey A.D.N.J."/>
            <person name="Drysdale R.A."/>
            <person name="Harris N.L."/>
            <person name="Richter J."/>
            <person name="Russo S."/>
            <person name="Schroeder A.J."/>
            <person name="Shu S.Q."/>
            <person name="Stapleton M."/>
            <person name="Yamada C."/>
            <person name="Ashburner M."/>
            <person name="Gelbart W.M."/>
            <person name="Rubin G.M."/>
            <person name="Lewis S.E."/>
        </authorList>
    </citation>
    <scope>GENOME REANNOTATION</scope>
    <source>
        <strain>Berkeley</strain>
    </source>
</reference>
<reference key="4">
    <citation type="journal article" date="2002" name="Genome Biol.">
        <title>A Drosophila full-length cDNA resource.</title>
        <authorList>
            <person name="Stapleton M."/>
            <person name="Carlson J.W."/>
            <person name="Brokstein P."/>
            <person name="Yu C."/>
            <person name="Champe M."/>
            <person name="George R.A."/>
            <person name="Guarin H."/>
            <person name="Kronmiller B."/>
            <person name="Pacleb J.M."/>
            <person name="Park S."/>
            <person name="Wan K.H."/>
            <person name="Rubin G.M."/>
            <person name="Celniker S.E."/>
        </authorList>
    </citation>
    <scope>NUCLEOTIDE SEQUENCE [LARGE SCALE MRNA]</scope>
    <source>
        <strain>Berkeley</strain>
        <tissue>Embryo</tissue>
    </source>
</reference>
<reference key="5">
    <citation type="journal article" date="1991" name="Neuron">
        <title>A G beta protein in the Drosophila compound eye is different from that in the brain.</title>
        <authorList>
            <person name="Yarfitz S."/>
            <person name="Niemi G.A."/>
            <person name="McConnell J.L."/>
            <person name="Fitch C.L."/>
            <person name="Hurley J.B."/>
        </authorList>
    </citation>
    <scope>TISSUE SPECIFICITY</scope>
    <scope>DEVELOPMENTAL STAGE</scope>
</reference>
<reference key="6">
    <citation type="journal article" date="2008" name="J. Proteome Res.">
        <title>Phosphoproteome analysis of Drosophila melanogaster embryos.</title>
        <authorList>
            <person name="Zhai B."/>
            <person name="Villen J."/>
            <person name="Beausoleil S.A."/>
            <person name="Mintseris J."/>
            <person name="Gygi S.P."/>
        </authorList>
    </citation>
    <scope>PHOSPHORYLATION [LARGE SCALE ANALYSIS] AT SER-29</scope>
    <scope>IDENTIFICATION BY MASS SPECTROMETRY</scope>
    <source>
        <tissue>Embryo</tissue>
    </source>
</reference>
<keyword id="KW-0597">Phosphoprotein</keyword>
<keyword id="KW-1185">Reference proteome</keyword>
<keyword id="KW-0677">Repeat</keyword>
<keyword id="KW-0807">Transducer</keyword>
<keyword id="KW-0853">WD repeat</keyword>
<organism>
    <name type="scientific">Drosophila melanogaster</name>
    <name type="common">Fruit fly</name>
    <dbReference type="NCBI Taxonomy" id="7227"/>
    <lineage>
        <taxon>Eukaryota</taxon>
        <taxon>Metazoa</taxon>
        <taxon>Ecdysozoa</taxon>
        <taxon>Arthropoda</taxon>
        <taxon>Hexapoda</taxon>
        <taxon>Insecta</taxon>
        <taxon>Pterygota</taxon>
        <taxon>Neoptera</taxon>
        <taxon>Endopterygota</taxon>
        <taxon>Diptera</taxon>
        <taxon>Brachycera</taxon>
        <taxon>Muscomorpha</taxon>
        <taxon>Ephydroidea</taxon>
        <taxon>Drosophilidae</taxon>
        <taxon>Drosophila</taxon>
        <taxon>Sophophora</taxon>
    </lineage>
</organism>
<evidence type="ECO:0000255" key="1"/>
<evidence type="ECO:0000269" key="2">
    <source>
    </source>
</evidence>
<evidence type="ECO:0000269" key="3">
    <source>
    </source>
</evidence>
<evidence type="ECO:0000269" key="4">
    <source>
    </source>
</evidence>
<evidence type="ECO:0000305" key="5"/>
<accession>P26308</accession>
<accession>Q9VXM8</accession>
<comment type="function">
    <text>Guanine nucleotide-binding proteins (G proteins) are involved as a modulator or transducer in various transmembrane signaling systems. The beta and gamma chains are required for the GTPase activity, for replacement of GDP by GTP, and for G protein-effector interaction.</text>
</comment>
<comment type="subunit">
    <text>G proteins are composed of 3 units, alpha, beta and gamma.</text>
</comment>
<comment type="tissue specificity">
    <text evidence="3">Expressed in the brain neuropil and cortex, and the thoracic ganglion (at protein level) (PubMed:1910788). Expression detected in eye at protein level but not at mRNA level, suggesting cross reactivity of antibodies to the similar Gbeta76C protein (PubMed:1910788).</text>
</comment>
<comment type="developmental stage">
    <text evidence="3 4">Expressed throughout development (PubMed:3140235). In adults, expression is higher in the head than in the body (PubMed:3140235). Expressed in pupal brain and thoracic ganglion, but not in the eye (PubMed:1910788).</text>
</comment>
<comment type="similarity">
    <text evidence="5">Belongs to the WD repeat G protein beta family.</text>
</comment>
<feature type="chain" id="PRO_0000127715" description="Guanine nucleotide-binding protein subunit beta-1">
    <location>
        <begin position="1"/>
        <end position="340"/>
    </location>
</feature>
<feature type="repeat" description="WD 1" evidence="1">
    <location>
        <begin position="53"/>
        <end position="92"/>
    </location>
</feature>
<feature type="repeat" description="WD 2" evidence="1">
    <location>
        <begin position="95"/>
        <end position="134"/>
    </location>
</feature>
<feature type="repeat" description="WD 3" evidence="1">
    <location>
        <begin position="141"/>
        <end position="179"/>
    </location>
</feature>
<feature type="repeat" description="WD 4" evidence="1">
    <location>
        <begin position="182"/>
        <end position="221"/>
    </location>
</feature>
<feature type="repeat" description="WD 5" evidence="1">
    <location>
        <begin position="224"/>
        <end position="263"/>
    </location>
</feature>
<feature type="repeat" description="WD 6" evidence="1">
    <location>
        <begin position="268"/>
        <end position="307"/>
    </location>
</feature>
<feature type="repeat" description="WD 7" evidence="1">
    <location>
        <begin position="310"/>
        <end position="340"/>
    </location>
</feature>
<feature type="modified residue" description="Phosphoserine" evidence="2">
    <location>
        <position position="29"/>
    </location>
</feature>
<proteinExistence type="evidence at protein level"/>